<name>AAEA_YERPS</name>
<gene>
    <name evidence="1" type="primary">aaeA</name>
    <name type="ordered locus">YPTB3547</name>
</gene>
<proteinExistence type="inferred from homology"/>
<accession>Q665H1</accession>
<keyword id="KW-0997">Cell inner membrane</keyword>
<keyword id="KW-1003">Cell membrane</keyword>
<keyword id="KW-0472">Membrane</keyword>
<keyword id="KW-0812">Transmembrane</keyword>
<keyword id="KW-1133">Transmembrane helix</keyword>
<keyword id="KW-0813">Transport</keyword>
<comment type="function">
    <text evidence="1">Forms an efflux pump with AaeB.</text>
</comment>
<comment type="subcellular location">
    <subcellularLocation>
        <location evidence="1">Cell inner membrane</location>
        <topology evidence="1">Single-pass membrane protein</topology>
    </subcellularLocation>
</comment>
<comment type="similarity">
    <text evidence="1">Belongs to the membrane fusion protein (MFP) (TC 8.A.1) family.</text>
</comment>
<reference key="1">
    <citation type="journal article" date="2004" name="Proc. Natl. Acad. Sci. U.S.A.">
        <title>Insights into the evolution of Yersinia pestis through whole-genome comparison with Yersinia pseudotuberculosis.</title>
        <authorList>
            <person name="Chain P.S.G."/>
            <person name="Carniel E."/>
            <person name="Larimer F.W."/>
            <person name="Lamerdin J."/>
            <person name="Stoutland P.O."/>
            <person name="Regala W.M."/>
            <person name="Georgescu A.M."/>
            <person name="Vergez L.M."/>
            <person name="Land M.L."/>
            <person name="Motin V.L."/>
            <person name="Brubaker R.R."/>
            <person name="Fowler J."/>
            <person name="Hinnebusch J."/>
            <person name="Marceau M."/>
            <person name="Medigue C."/>
            <person name="Simonet M."/>
            <person name="Chenal-Francisque V."/>
            <person name="Souza B."/>
            <person name="Dacheux D."/>
            <person name="Elliott J.M."/>
            <person name="Derbise A."/>
            <person name="Hauser L.J."/>
            <person name="Garcia E."/>
        </authorList>
    </citation>
    <scope>NUCLEOTIDE SEQUENCE [LARGE SCALE GENOMIC DNA]</scope>
    <source>
        <strain>IP32953</strain>
    </source>
</reference>
<sequence>MSTFSLKIIRVGITVLVVVLAVIAIFNVWAFYTESPWTRDAKFTADVVAIAPDVSGLLTEVPVKDNQLVQKGQILFVIDQPRYQQALAEAEADVAYYQTLAAEKQRESSRRHRLGIQALSQEEIDQASNVLQTVQHQLAKAIAVRDLARLDLERTTVRAPAEGWVTNLNVHAGEFINRGATAVALVKKDTFYILAYLEETKLEGVKPGYRAEITPLGSNRILHGTVDSISAGVTNSSSSADSKGLATIDNNLEWVRLAQRVPVKIHLDSEDQQYLYPAGTTATVVITGPNDRDPHQASPMTKLMHRLREFG</sequence>
<protein>
    <recommendedName>
        <fullName evidence="1">p-hydroxybenzoic acid efflux pump subunit AaeA</fullName>
        <shortName evidence="1">pHBA efflux pump protein A</shortName>
    </recommendedName>
</protein>
<dbReference type="EMBL" id="BX936398">
    <property type="protein sequence ID" value="CAH22785.1"/>
    <property type="molecule type" value="Genomic_DNA"/>
</dbReference>
<dbReference type="RefSeq" id="WP_002210094.1">
    <property type="nucleotide sequence ID" value="NZ_CP009712.1"/>
</dbReference>
<dbReference type="SMR" id="Q665H1"/>
<dbReference type="GeneID" id="57975110"/>
<dbReference type="KEGG" id="ypo:BZ17_3054"/>
<dbReference type="KEGG" id="yps:YPTB3547"/>
<dbReference type="PATRIC" id="fig|273123.14.peg.3200"/>
<dbReference type="Proteomes" id="UP000001011">
    <property type="component" value="Chromosome"/>
</dbReference>
<dbReference type="GO" id="GO:0005886">
    <property type="term" value="C:plasma membrane"/>
    <property type="evidence" value="ECO:0007669"/>
    <property type="project" value="UniProtKB-SubCell"/>
</dbReference>
<dbReference type="GO" id="GO:0022857">
    <property type="term" value="F:transmembrane transporter activity"/>
    <property type="evidence" value="ECO:0007669"/>
    <property type="project" value="UniProtKB-UniRule"/>
</dbReference>
<dbReference type="Gene3D" id="2.40.30.170">
    <property type="match status" value="1"/>
</dbReference>
<dbReference type="Gene3D" id="2.40.50.100">
    <property type="match status" value="1"/>
</dbReference>
<dbReference type="HAMAP" id="MF_01544">
    <property type="entry name" value="AaeA"/>
    <property type="match status" value="1"/>
</dbReference>
<dbReference type="InterPro" id="IPR043602">
    <property type="entry name" value="CusB-like_dom_1"/>
</dbReference>
<dbReference type="InterPro" id="IPR032317">
    <property type="entry name" value="CusB_D23"/>
</dbReference>
<dbReference type="InterPro" id="IPR050393">
    <property type="entry name" value="MFP_Efflux_Pump"/>
</dbReference>
<dbReference type="InterPro" id="IPR022871">
    <property type="entry name" value="PHBA_efflux_pump_AaeA"/>
</dbReference>
<dbReference type="InterPro" id="IPR006143">
    <property type="entry name" value="RND_pump_MFP"/>
</dbReference>
<dbReference type="NCBIfam" id="NF007850">
    <property type="entry name" value="PRK10559.1"/>
    <property type="match status" value="1"/>
</dbReference>
<dbReference type="NCBIfam" id="TIGR01730">
    <property type="entry name" value="RND_mfp"/>
    <property type="match status" value="1"/>
</dbReference>
<dbReference type="PANTHER" id="PTHR30367:SF12">
    <property type="entry name" value="P-HYDROXYBENZOIC ACID EFFLUX PUMP SUBUNIT AAEA"/>
    <property type="match status" value="1"/>
</dbReference>
<dbReference type="PANTHER" id="PTHR30367">
    <property type="entry name" value="P-HYDROXYBENZOIC ACID EFFLUX PUMP SUBUNIT AAEA-RELATED"/>
    <property type="match status" value="1"/>
</dbReference>
<dbReference type="Pfam" id="PF00529">
    <property type="entry name" value="CusB_dom_1"/>
    <property type="match status" value="1"/>
</dbReference>
<dbReference type="Pfam" id="PF16576">
    <property type="entry name" value="HlyD_D23"/>
    <property type="match status" value="1"/>
</dbReference>
<dbReference type="SUPFAM" id="SSF111369">
    <property type="entry name" value="HlyD-like secretion proteins"/>
    <property type="match status" value="1"/>
</dbReference>
<evidence type="ECO:0000255" key="1">
    <source>
        <dbReference type="HAMAP-Rule" id="MF_01544"/>
    </source>
</evidence>
<feature type="chain" id="PRO_0000201859" description="p-hydroxybenzoic acid efflux pump subunit AaeA">
    <location>
        <begin position="1"/>
        <end position="311"/>
    </location>
</feature>
<feature type="transmembrane region" description="Helical" evidence="1">
    <location>
        <begin position="11"/>
        <end position="31"/>
    </location>
</feature>
<organism>
    <name type="scientific">Yersinia pseudotuberculosis serotype I (strain IP32953)</name>
    <dbReference type="NCBI Taxonomy" id="273123"/>
    <lineage>
        <taxon>Bacteria</taxon>
        <taxon>Pseudomonadati</taxon>
        <taxon>Pseudomonadota</taxon>
        <taxon>Gammaproteobacteria</taxon>
        <taxon>Enterobacterales</taxon>
        <taxon>Yersiniaceae</taxon>
        <taxon>Yersinia</taxon>
    </lineage>
</organism>